<protein>
    <recommendedName>
        <fullName evidence="1">tRNA pseudouridine synthase A</fullName>
        <ecNumber evidence="1">5.4.99.12</ecNumber>
    </recommendedName>
    <alternativeName>
        <fullName evidence="1">tRNA pseudouridine(38-40) synthase</fullName>
    </alternativeName>
    <alternativeName>
        <fullName evidence="1">tRNA pseudouridylate synthase I</fullName>
    </alternativeName>
    <alternativeName>
        <fullName evidence="1">tRNA-uridine isomerase I</fullName>
    </alternativeName>
</protein>
<dbReference type="EC" id="5.4.99.12" evidence="1"/>
<dbReference type="EMBL" id="CP001280">
    <property type="protein sequence ID" value="ACK50099.1"/>
    <property type="molecule type" value="Genomic_DNA"/>
</dbReference>
<dbReference type="RefSeq" id="WP_012590169.1">
    <property type="nucleotide sequence ID" value="NC_011666.1"/>
</dbReference>
<dbReference type="SMR" id="B8ENG8"/>
<dbReference type="STRING" id="395965.Msil_1130"/>
<dbReference type="KEGG" id="msl:Msil_1130"/>
<dbReference type="eggNOG" id="COG0101">
    <property type="taxonomic scope" value="Bacteria"/>
</dbReference>
<dbReference type="HOGENOM" id="CLU_014673_0_2_5"/>
<dbReference type="OrthoDB" id="9811823at2"/>
<dbReference type="Proteomes" id="UP000002257">
    <property type="component" value="Chromosome"/>
</dbReference>
<dbReference type="GO" id="GO:0003723">
    <property type="term" value="F:RNA binding"/>
    <property type="evidence" value="ECO:0007669"/>
    <property type="project" value="InterPro"/>
</dbReference>
<dbReference type="GO" id="GO:0160147">
    <property type="term" value="F:tRNA pseudouridine(38-40) synthase activity"/>
    <property type="evidence" value="ECO:0007669"/>
    <property type="project" value="UniProtKB-EC"/>
</dbReference>
<dbReference type="GO" id="GO:0031119">
    <property type="term" value="P:tRNA pseudouridine synthesis"/>
    <property type="evidence" value="ECO:0007669"/>
    <property type="project" value="UniProtKB-UniRule"/>
</dbReference>
<dbReference type="CDD" id="cd02570">
    <property type="entry name" value="PseudoU_synth_EcTruA"/>
    <property type="match status" value="1"/>
</dbReference>
<dbReference type="FunFam" id="3.30.70.580:FF:000001">
    <property type="entry name" value="tRNA pseudouridine synthase A"/>
    <property type="match status" value="1"/>
</dbReference>
<dbReference type="Gene3D" id="3.30.70.660">
    <property type="entry name" value="Pseudouridine synthase I, catalytic domain, C-terminal subdomain"/>
    <property type="match status" value="1"/>
</dbReference>
<dbReference type="Gene3D" id="3.30.70.580">
    <property type="entry name" value="Pseudouridine synthase I, catalytic domain, N-terminal subdomain"/>
    <property type="match status" value="1"/>
</dbReference>
<dbReference type="HAMAP" id="MF_00171">
    <property type="entry name" value="TruA"/>
    <property type="match status" value="1"/>
</dbReference>
<dbReference type="InterPro" id="IPR020103">
    <property type="entry name" value="PsdUridine_synth_cat_dom_sf"/>
</dbReference>
<dbReference type="InterPro" id="IPR001406">
    <property type="entry name" value="PsdUridine_synth_TruA"/>
</dbReference>
<dbReference type="InterPro" id="IPR020097">
    <property type="entry name" value="PsdUridine_synth_TruA_a/b_dom"/>
</dbReference>
<dbReference type="InterPro" id="IPR020095">
    <property type="entry name" value="PsdUridine_synth_TruA_C"/>
</dbReference>
<dbReference type="InterPro" id="IPR020094">
    <property type="entry name" value="TruA/RsuA/RluB/E/F_N"/>
</dbReference>
<dbReference type="NCBIfam" id="TIGR00071">
    <property type="entry name" value="hisT_truA"/>
    <property type="match status" value="1"/>
</dbReference>
<dbReference type="PANTHER" id="PTHR11142">
    <property type="entry name" value="PSEUDOURIDYLATE SYNTHASE"/>
    <property type="match status" value="1"/>
</dbReference>
<dbReference type="PANTHER" id="PTHR11142:SF0">
    <property type="entry name" value="TRNA PSEUDOURIDINE SYNTHASE-LIKE 1"/>
    <property type="match status" value="1"/>
</dbReference>
<dbReference type="Pfam" id="PF01416">
    <property type="entry name" value="PseudoU_synth_1"/>
    <property type="match status" value="2"/>
</dbReference>
<dbReference type="PIRSF" id="PIRSF001430">
    <property type="entry name" value="tRNA_psdUrid_synth"/>
    <property type="match status" value="1"/>
</dbReference>
<dbReference type="SUPFAM" id="SSF55120">
    <property type="entry name" value="Pseudouridine synthase"/>
    <property type="match status" value="1"/>
</dbReference>
<name>TRUA_METSB</name>
<proteinExistence type="inferred from homology"/>
<accession>B8ENG8</accession>
<organism>
    <name type="scientific">Methylocella silvestris (strain DSM 15510 / CIP 108128 / LMG 27833 / NCIMB 13906 / BL2)</name>
    <dbReference type="NCBI Taxonomy" id="395965"/>
    <lineage>
        <taxon>Bacteria</taxon>
        <taxon>Pseudomonadati</taxon>
        <taxon>Pseudomonadota</taxon>
        <taxon>Alphaproteobacteria</taxon>
        <taxon>Hyphomicrobiales</taxon>
        <taxon>Beijerinckiaceae</taxon>
        <taxon>Methylocella</taxon>
    </lineage>
</organism>
<reference key="1">
    <citation type="journal article" date="2010" name="J. Bacteriol.">
        <title>Complete genome sequence of the aerobic facultative methanotroph Methylocella silvestris BL2.</title>
        <authorList>
            <person name="Chen Y."/>
            <person name="Crombie A."/>
            <person name="Rahman M.T."/>
            <person name="Dedysh S.N."/>
            <person name="Liesack W."/>
            <person name="Stott M.B."/>
            <person name="Alam M."/>
            <person name="Theisen A.R."/>
            <person name="Murrell J.C."/>
            <person name="Dunfield P.F."/>
        </authorList>
    </citation>
    <scope>NUCLEOTIDE SEQUENCE [LARGE SCALE GENOMIC DNA]</scope>
    <source>
        <strain>DSM 15510 / CIP 108128 / LMG 27833 / NCIMB 13906 / BL2</strain>
    </source>
</reference>
<evidence type="ECO:0000255" key="1">
    <source>
        <dbReference type="HAMAP-Rule" id="MF_00171"/>
    </source>
</evidence>
<keyword id="KW-0413">Isomerase</keyword>
<keyword id="KW-1185">Reference proteome</keyword>
<keyword id="KW-0819">tRNA processing</keyword>
<gene>
    <name evidence="1" type="primary">truA</name>
    <name type="ordered locus">Msil_1130</name>
</gene>
<sequence>MPRFKLLIEYDGAPFVGWQRQANGFSVQEAIETALGGFTGESVAIHGAGRTDAGVHARGQVAHVDFSRDWRPDVLRDAANAWLRPNPIAILKAERVDDEFSARFSAVRRHYLYKIINRRASLTLEAGRCWAIRRSLDAGAMHEAAQTLLGFHDFSTFRDSECQAESPLRTLERFDVLRDGENIEIHVAARSFLHSQVRSMVGSLAHVGSGKWRVEDMAEALAAKDRRRCGVVAPPEGLYLMQVDYEEA</sequence>
<feature type="chain" id="PRO_1000194563" description="tRNA pseudouridine synthase A">
    <location>
        <begin position="1"/>
        <end position="248"/>
    </location>
</feature>
<feature type="active site" description="Nucleophile" evidence="1">
    <location>
        <position position="52"/>
    </location>
</feature>
<feature type="binding site" evidence="1">
    <location>
        <position position="111"/>
    </location>
    <ligand>
        <name>substrate</name>
    </ligand>
</feature>
<comment type="function">
    <text evidence="1">Formation of pseudouridine at positions 38, 39 and 40 in the anticodon stem and loop of transfer RNAs.</text>
</comment>
<comment type="catalytic activity">
    <reaction evidence="1">
        <text>uridine(38/39/40) in tRNA = pseudouridine(38/39/40) in tRNA</text>
        <dbReference type="Rhea" id="RHEA:22376"/>
        <dbReference type="Rhea" id="RHEA-COMP:10085"/>
        <dbReference type="Rhea" id="RHEA-COMP:10087"/>
        <dbReference type="ChEBI" id="CHEBI:65314"/>
        <dbReference type="ChEBI" id="CHEBI:65315"/>
        <dbReference type="EC" id="5.4.99.12"/>
    </reaction>
</comment>
<comment type="subunit">
    <text evidence="1">Homodimer.</text>
</comment>
<comment type="similarity">
    <text evidence="1">Belongs to the tRNA pseudouridine synthase TruA family.</text>
</comment>